<reference key="1">
    <citation type="journal article" date="2004" name="J. Bacteriol.">
        <title>Complete genome sequence of the genetically tractable hydrogenotrophic methanogen Methanococcus maripaludis.</title>
        <authorList>
            <person name="Hendrickson E.L."/>
            <person name="Kaul R."/>
            <person name="Zhou Y."/>
            <person name="Bovee D."/>
            <person name="Chapman P."/>
            <person name="Chung J."/>
            <person name="Conway de Macario E."/>
            <person name="Dodsworth J.A."/>
            <person name="Gillett W."/>
            <person name="Graham D.E."/>
            <person name="Hackett M."/>
            <person name="Haydock A.K."/>
            <person name="Kang A."/>
            <person name="Land M.L."/>
            <person name="Levy R."/>
            <person name="Lie T.J."/>
            <person name="Major T.A."/>
            <person name="Moore B.C."/>
            <person name="Porat I."/>
            <person name="Palmeiri A."/>
            <person name="Rouse G."/>
            <person name="Saenphimmachak C."/>
            <person name="Soell D."/>
            <person name="Van Dien S."/>
            <person name="Wang T."/>
            <person name="Whitman W.B."/>
            <person name="Xia Q."/>
            <person name="Zhang Y."/>
            <person name="Larimer F.W."/>
            <person name="Olson M.V."/>
            <person name="Leigh J.A."/>
        </authorList>
    </citation>
    <scope>NUCLEOTIDE SEQUENCE [LARGE SCALE GENOMIC DNA]</scope>
    <source>
        <strain>DSM 14266 / JCM 13030 / NBRC 101832 / S2 / LL</strain>
    </source>
</reference>
<reference key="2">
    <citation type="journal article" date="2004" name="J. Bacteriol.">
        <title>Two biosynthetic pathways for aromatic amino acids in the archaeon Methanococcus maripaludis.</title>
        <authorList>
            <person name="Porat I."/>
            <person name="Waters B.W."/>
            <person name="Teng Q."/>
            <person name="Whitman W.B."/>
        </authorList>
    </citation>
    <scope>FUNCTION IN AROAAS BIOSYNTHESIS</scope>
    <scope>PATHWAY</scope>
    <scope>DISRUPTION PHENOTYPE</scope>
    <source>
        <strain>DSM 14266 / JCM 13030 / NBRC 101832 / S2 / LL</strain>
    </source>
</reference>
<gene>
    <name evidence="1" type="primary">aroD</name>
    <name type="ordered locus">MMP1394</name>
</gene>
<name>AROD_METMP</name>
<feature type="chain" id="PRO_1000043175" description="3-dehydroquinate dehydratase">
    <location>
        <begin position="1"/>
        <end position="218"/>
    </location>
</feature>
<feature type="active site" description="Proton donor/acceptor" evidence="1">
    <location>
        <position position="116"/>
    </location>
</feature>
<feature type="active site" description="Schiff-base intermediate with substrate" evidence="1">
    <location>
        <position position="142"/>
    </location>
</feature>
<feature type="binding site" evidence="1">
    <location>
        <begin position="29"/>
        <end position="31"/>
    </location>
    <ligand>
        <name>3-dehydroquinate</name>
        <dbReference type="ChEBI" id="CHEBI:32364"/>
    </ligand>
</feature>
<feature type="binding site" evidence="1">
    <location>
        <position position="56"/>
    </location>
    <ligand>
        <name>3-dehydroquinate</name>
        <dbReference type="ChEBI" id="CHEBI:32364"/>
    </ligand>
</feature>
<feature type="binding site" evidence="1">
    <location>
        <position position="180"/>
    </location>
    <ligand>
        <name>3-dehydroquinate</name>
        <dbReference type="ChEBI" id="CHEBI:32364"/>
    </ligand>
</feature>
<feature type="binding site" evidence="1">
    <location>
        <position position="200"/>
    </location>
    <ligand>
        <name>3-dehydroquinate</name>
        <dbReference type="ChEBI" id="CHEBI:32364"/>
    </ligand>
</feature>
<feature type="binding site" evidence="1">
    <location>
        <position position="204"/>
    </location>
    <ligand>
        <name>3-dehydroquinate</name>
        <dbReference type="ChEBI" id="CHEBI:32364"/>
    </ligand>
</feature>
<keyword id="KW-0028">Amino-acid biosynthesis</keyword>
<keyword id="KW-0057">Aromatic amino acid biosynthesis</keyword>
<keyword id="KW-0456">Lyase</keyword>
<keyword id="KW-1185">Reference proteome</keyword>
<keyword id="KW-0704">Schiff base</keyword>
<dbReference type="EC" id="4.2.1.10" evidence="1"/>
<dbReference type="EMBL" id="BX950229">
    <property type="protein sequence ID" value="CAF30950.1"/>
    <property type="molecule type" value="Genomic_DNA"/>
</dbReference>
<dbReference type="RefSeq" id="WP_011171338.1">
    <property type="nucleotide sequence ID" value="NC_005791.1"/>
</dbReference>
<dbReference type="SMR" id="Q6LXF7"/>
<dbReference type="STRING" id="267377.MMP1394"/>
<dbReference type="EnsemblBacteria" id="CAF30950">
    <property type="protein sequence ID" value="CAF30950"/>
    <property type="gene ID" value="MMP1394"/>
</dbReference>
<dbReference type="GeneID" id="2762224"/>
<dbReference type="KEGG" id="mmp:MMP1394"/>
<dbReference type="PATRIC" id="fig|267377.15.peg.1430"/>
<dbReference type="eggNOG" id="arCOG02097">
    <property type="taxonomic scope" value="Archaea"/>
</dbReference>
<dbReference type="HOGENOM" id="CLU_064444_2_1_2"/>
<dbReference type="OrthoDB" id="34329at2157"/>
<dbReference type="BioCyc" id="MetaCyc:MONOMER-14591"/>
<dbReference type="UniPathway" id="UPA00053">
    <property type="reaction ID" value="UER00086"/>
</dbReference>
<dbReference type="Proteomes" id="UP000000590">
    <property type="component" value="Chromosome"/>
</dbReference>
<dbReference type="GO" id="GO:0003855">
    <property type="term" value="F:3-dehydroquinate dehydratase activity"/>
    <property type="evidence" value="ECO:0007669"/>
    <property type="project" value="UniProtKB-UniRule"/>
</dbReference>
<dbReference type="GO" id="GO:0046279">
    <property type="term" value="P:3,4-dihydroxybenzoate biosynthetic process"/>
    <property type="evidence" value="ECO:0007669"/>
    <property type="project" value="UniProtKB-ARBA"/>
</dbReference>
<dbReference type="GO" id="GO:0008652">
    <property type="term" value="P:amino acid biosynthetic process"/>
    <property type="evidence" value="ECO:0007669"/>
    <property type="project" value="UniProtKB-KW"/>
</dbReference>
<dbReference type="GO" id="GO:0009073">
    <property type="term" value="P:aromatic amino acid family biosynthetic process"/>
    <property type="evidence" value="ECO:0007669"/>
    <property type="project" value="UniProtKB-KW"/>
</dbReference>
<dbReference type="GO" id="GO:0009423">
    <property type="term" value="P:chorismate biosynthetic process"/>
    <property type="evidence" value="ECO:0007669"/>
    <property type="project" value="UniProtKB-UniRule"/>
</dbReference>
<dbReference type="CDD" id="cd00502">
    <property type="entry name" value="DHQase_I"/>
    <property type="match status" value="1"/>
</dbReference>
<dbReference type="FunFam" id="3.20.20.70:FF:000047">
    <property type="entry name" value="3-dehydroquinate dehydratase"/>
    <property type="match status" value="1"/>
</dbReference>
<dbReference type="Gene3D" id="3.20.20.70">
    <property type="entry name" value="Aldolase class I"/>
    <property type="match status" value="1"/>
</dbReference>
<dbReference type="HAMAP" id="MF_00214">
    <property type="entry name" value="AroD"/>
    <property type="match status" value="1"/>
</dbReference>
<dbReference type="InterPro" id="IPR018508">
    <property type="entry name" value="3-dehydroquinate_DH_AS"/>
</dbReference>
<dbReference type="InterPro" id="IPR013785">
    <property type="entry name" value="Aldolase_TIM"/>
</dbReference>
<dbReference type="InterPro" id="IPR001381">
    <property type="entry name" value="DHquinase_I"/>
</dbReference>
<dbReference type="InterPro" id="IPR050146">
    <property type="entry name" value="Type-I_3-dehydroquinase"/>
</dbReference>
<dbReference type="NCBIfam" id="TIGR01093">
    <property type="entry name" value="aroD"/>
    <property type="match status" value="1"/>
</dbReference>
<dbReference type="PANTHER" id="PTHR43699">
    <property type="entry name" value="3-DEHYDROQUINATE DEHYDRATASE"/>
    <property type="match status" value="1"/>
</dbReference>
<dbReference type="PANTHER" id="PTHR43699:SF1">
    <property type="entry name" value="3-DEHYDROQUINATE DEHYDRATASE"/>
    <property type="match status" value="1"/>
</dbReference>
<dbReference type="Pfam" id="PF01487">
    <property type="entry name" value="DHquinase_I"/>
    <property type="match status" value="1"/>
</dbReference>
<dbReference type="SUPFAM" id="SSF51569">
    <property type="entry name" value="Aldolase"/>
    <property type="match status" value="1"/>
</dbReference>
<dbReference type="PROSITE" id="PS01028">
    <property type="entry name" value="DEHYDROQUINASE_I"/>
    <property type="match status" value="1"/>
</dbReference>
<organism>
    <name type="scientific">Methanococcus maripaludis (strain DSM 14266 / JCM 13030 / NBRC 101832 / S2 / LL)</name>
    <dbReference type="NCBI Taxonomy" id="267377"/>
    <lineage>
        <taxon>Archaea</taxon>
        <taxon>Methanobacteriati</taxon>
        <taxon>Methanobacteriota</taxon>
        <taxon>Methanomada group</taxon>
        <taxon>Methanococci</taxon>
        <taxon>Methanococcales</taxon>
        <taxon>Methanococcaceae</taxon>
        <taxon>Methanococcus</taxon>
    </lineage>
</organism>
<proteinExistence type="evidence at protein level"/>
<comment type="function">
    <text evidence="1 2">Involved in the third step of the chorismate pathway, which leads to the biosynthesis of aromatic amino acids. Catalyzes the cis-dehydration of 3-dehydroquinate (DHQ) and introduces the first double bond of the aromatic ring to yield 3-dehydroshikimate.</text>
</comment>
<comment type="catalytic activity">
    <reaction evidence="1">
        <text>3-dehydroquinate = 3-dehydroshikimate + H2O</text>
        <dbReference type="Rhea" id="RHEA:21096"/>
        <dbReference type="ChEBI" id="CHEBI:15377"/>
        <dbReference type="ChEBI" id="CHEBI:16630"/>
        <dbReference type="ChEBI" id="CHEBI:32364"/>
        <dbReference type="EC" id="4.2.1.10"/>
    </reaction>
</comment>
<comment type="pathway">
    <text evidence="1 2">Metabolic intermediate biosynthesis; chorismate biosynthesis; chorismate from D-erythrose 4-phosphate and phosphoenolpyruvate: step 3/7.</text>
</comment>
<comment type="subunit">
    <text evidence="1">Homodimer.</text>
</comment>
<comment type="disruption phenotype">
    <text evidence="2">Deletion mutant is auxotrophic for all three aromatic amino acids (AroAAs) and lacks 3-dehydroquinate dehydratase activity.</text>
</comment>
<comment type="similarity">
    <text evidence="1">Belongs to the type-I 3-dehydroquinase family.</text>
</comment>
<protein>
    <recommendedName>
        <fullName evidence="1">3-dehydroquinate dehydratase</fullName>
        <shortName evidence="1">3-dehydroquinase</shortName>
        <ecNumber evidence="1">4.2.1.10</ecNumber>
    </recommendedName>
    <alternativeName>
        <fullName evidence="1">Type I DHQase</fullName>
    </alternativeName>
    <alternativeName>
        <fullName evidence="1">Type I dehydroquinase</fullName>
        <shortName evidence="1">DHQ1</shortName>
    </alternativeName>
</protein>
<evidence type="ECO:0000255" key="1">
    <source>
        <dbReference type="HAMAP-Rule" id="MF_00214"/>
    </source>
</evidence>
<evidence type="ECO:0000269" key="2">
    <source>
    </source>
</evidence>
<sequence>MICIPVIDKDVSDAINSAKEALKYGDIVEFRIDLLNDVNFKDIEEFSKIPSIITIRAEWEGGAWRKSNEERIELLKNAIKNNAKFIDIELKEEKNLELVKYRNEIGSTTKIIVSYHDFEKTPEIDELIDVVEKELKIGDIAKFATFAHSKEDTLKILNLMNRYSGKIIAIGMGESGKLTRILGLDFGSILTFASMGGKASAPGQVDVKKLKEILKLIN</sequence>
<accession>Q6LXF7</accession>